<proteinExistence type="inferred from homology"/>
<reference key="1">
    <citation type="submission" date="2007-10" db="EMBL/GenBank/DDBJ databases">
        <title>Complete sequence of Salinispora arenicola CNS-205.</title>
        <authorList>
            <consortium name="US DOE Joint Genome Institute"/>
            <person name="Copeland A."/>
            <person name="Lucas S."/>
            <person name="Lapidus A."/>
            <person name="Barry K."/>
            <person name="Glavina del Rio T."/>
            <person name="Dalin E."/>
            <person name="Tice H."/>
            <person name="Pitluck S."/>
            <person name="Foster B."/>
            <person name="Schmutz J."/>
            <person name="Larimer F."/>
            <person name="Land M."/>
            <person name="Hauser L."/>
            <person name="Kyrpides N."/>
            <person name="Ivanova N."/>
            <person name="Jensen P.R."/>
            <person name="Moore B.S."/>
            <person name="Penn K."/>
            <person name="Jenkins C."/>
            <person name="Udwary D."/>
            <person name="Xiang L."/>
            <person name="Gontang E."/>
            <person name="Richardson P."/>
        </authorList>
    </citation>
    <scope>NUCLEOTIDE SEQUENCE [LARGE SCALE GENOMIC DNA]</scope>
    <source>
        <strain>CNS-205</strain>
    </source>
</reference>
<protein>
    <recommendedName>
        <fullName evidence="1">Ribonuclease Y</fullName>
        <shortName evidence="1">RNase Y</shortName>
        <ecNumber evidence="1">3.1.-.-</ecNumber>
    </recommendedName>
</protein>
<comment type="function">
    <text evidence="1">Endoribonuclease that initiates mRNA decay.</text>
</comment>
<comment type="subcellular location">
    <subcellularLocation>
        <location evidence="1">Cell membrane</location>
        <topology evidence="1">Single-pass membrane protein</topology>
    </subcellularLocation>
</comment>
<comment type="similarity">
    <text evidence="1">Belongs to the RNase Y family.</text>
</comment>
<dbReference type="EC" id="3.1.-.-" evidence="1"/>
<dbReference type="EMBL" id="CP000850">
    <property type="protein sequence ID" value="ABV97291.1"/>
    <property type="molecule type" value="Genomic_DNA"/>
</dbReference>
<dbReference type="SMR" id="A8M7V7"/>
<dbReference type="STRING" id="391037.Sare_1391"/>
<dbReference type="KEGG" id="saq:Sare_1391"/>
<dbReference type="PATRIC" id="fig|391037.6.peg.1416"/>
<dbReference type="eggNOG" id="COG1418">
    <property type="taxonomic scope" value="Bacteria"/>
</dbReference>
<dbReference type="HOGENOM" id="CLU_028328_1_0_11"/>
<dbReference type="OrthoDB" id="9803205at2"/>
<dbReference type="GO" id="GO:0005886">
    <property type="term" value="C:plasma membrane"/>
    <property type="evidence" value="ECO:0007669"/>
    <property type="project" value="UniProtKB-SubCell"/>
</dbReference>
<dbReference type="GO" id="GO:0003723">
    <property type="term" value="F:RNA binding"/>
    <property type="evidence" value="ECO:0007669"/>
    <property type="project" value="UniProtKB-UniRule"/>
</dbReference>
<dbReference type="GO" id="GO:0004521">
    <property type="term" value="F:RNA endonuclease activity"/>
    <property type="evidence" value="ECO:0007669"/>
    <property type="project" value="UniProtKB-UniRule"/>
</dbReference>
<dbReference type="GO" id="GO:0006402">
    <property type="term" value="P:mRNA catabolic process"/>
    <property type="evidence" value="ECO:0007669"/>
    <property type="project" value="UniProtKB-UniRule"/>
</dbReference>
<dbReference type="CDD" id="cd00077">
    <property type="entry name" value="HDc"/>
    <property type="match status" value="1"/>
</dbReference>
<dbReference type="CDD" id="cd22431">
    <property type="entry name" value="KH-I_RNaseY"/>
    <property type="match status" value="1"/>
</dbReference>
<dbReference type="Gene3D" id="1.10.3210.10">
    <property type="entry name" value="Hypothetical protein af1432"/>
    <property type="match status" value="1"/>
</dbReference>
<dbReference type="HAMAP" id="MF_00335">
    <property type="entry name" value="RNase_Y"/>
    <property type="match status" value="1"/>
</dbReference>
<dbReference type="InterPro" id="IPR003607">
    <property type="entry name" value="HD/PDEase_dom"/>
</dbReference>
<dbReference type="InterPro" id="IPR006674">
    <property type="entry name" value="HD_domain"/>
</dbReference>
<dbReference type="InterPro" id="IPR006675">
    <property type="entry name" value="HDIG_dom"/>
</dbReference>
<dbReference type="InterPro" id="IPR004088">
    <property type="entry name" value="KH_dom_type_1"/>
</dbReference>
<dbReference type="InterPro" id="IPR036612">
    <property type="entry name" value="KH_dom_type_1_sf"/>
</dbReference>
<dbReference type="InterPro" id="IPR017705">
    <property type="entry name" value="Ribonuclease_Y"/>
</dbReference>
<dbReference type="InterPro" id="IPR022711">
    <property type="entry name" value="RNase_Y_N"/>
</dbReference>
<dbReference type="NCBIfam" id="TIGR00277">
    <property type="entry name" value="HDIG"/>
    <property type="match status" value="1"/>
</dbReference>
<dbReference type="NCBIfam" id="TIGR03319">
    <property type="entry name" value="RNase_Y"/>
    <property type="match status" value="1"/>
</dbReference>
<dbReference type="PANTHER" id="PTHR12826">
    <property type="entry name" value="RIBONUCLEASE Y"/>
    <property type="match status" value="1"/>
</dbReference>
<dbReference type="PANTHER" id="PTHR12826:SF15">
    <property type="entry name" value="RIBONUCLEASE Y"/>
    <property type="match status" value="1"/>
</dbReference>
<dbReference type="Pfam" id="PF01966">
    <property type="entry name" value="HD"/>
    <property type="match status" value="1"/>
</dbReference>
<dbReference type="Pfam" id="PF00013">
    <property type="entry name" value="KH_1"/>
    <property type="match status" value="1"/>
</dbReference>
<dbReference type="Pfam" id="PF12072">
    <property type="entry name" value="RNase_Y_N"/>
    <property type="match status" value="1"/>
</dbReference>
<dbReference type="SMART" id="SM00471">
    <property type="entry name" value="HDc"/>
    <property type="match status" value="1"/>
</dbReference>
<dbReference type="SUPFAM" id="SSF54791">
    <property type="entry name" value="Eukaryotic type KH-domain (KH-domain type I)"/>
    <property type="match status" value="1"/>
</dbReference>
<dbReference type="SUPFAM" id="SSF109604">
    <property type="entry name" value="HD-domain/PDEase-like"/>
    <property type="match status" value="1"/>
</dbReference>
<dbReference type="PROSITE" id="PS51831">
    <property type="entry name" value="HD"/>
    <property type="match status" value="1"/>
</dbReference>
<dbReference type="PROSITE" id="PS50084">
    <property type="entry name" value="KH_TYPE_1"/>
    <property type="match status" value="1"/>
</dbReference>
<gene>
    <name evidence="1" type="primary">rny</name>
    <name type="ordered locus">Sare_1391</name>
</gene>
<evidence type="ECO:0000255" key="1">
    <source>
        <dbReference type="HAMAP-Rule" id="MF_00335"/>
    </source>
</evidence>
<evidence type="ECO:0000255" key="2">
    <source>
        <dbReference type="PROSITE-ProRule" id="PRU01175"/>
    </source>
</evidence>
<evidence type="ECO:0000256" key="3">
    <source>
        <dbReference type="SAM" id="MobiDB-lite"/>
    </source>
</evidence>
<feature type="chain" id="PRO_0000344930" description="Ribonuclease Y">
    <location>
        <begin position="1"/>
        <end position="588"/>
    </location>
</feature>
<feature type="transmembrane region" description="Helical" evidence="1">
    <location>
        <begin position="7"/>
        <end position="27"/>
    </location>
</feature>
<feature type="domain" description="KH" evidence="1">
    <location>
        <begin position="278"/>
        <end position="359"/>
    </location>
</feature>
<feature type="domain" description="HD" evidence="2">
    <location>
        <begin position="404"/>
        <end position="497"/>
    </location>
</feature>
<feature type="region of interest" description="Disordered" evidence="3">
    <location>
        <begin position="130"/>
        <end position="162"/>
    </location>
</feature>
<feature type="compositionally biased region" description="Basic and acidic residues" evidence="3">
    <location>
        <begin position="148"/>
        <end position="162"/>
    </location>
</feature>
<name>RNY_SALAI</name>
<sequence length="588" mass="64289">MSGFDAVLLVAVLLLALIVLGAVLVGVRAVRGIAGAPRPEDPAFIAEKDRQEQSLAALRSAADEANSTVDAAKSAAAAARTEAAAARAEAKAARAEARRVLDGARAEADTILERVHKQAEADAEQLRTAARRSGEREAAVLATTTREQAAEVERRAARMDDRERLHSEEVERLAERDRQLSAASAALAARESTLVDRDRELAQAEDRRRRELERVAGITAEAARGELVEAIEAQAKREAALLVREIESEARNTGEERARHIVVDAIQRVASEQTAESVVSVLHLPGDEMKGRIIGREGRNIRAFESVTGVNLIIDDTPEAVLLSCFDPVRREVGRLTLEKLVLDGRIHPHRIEEVHDLARQEVVQLCQRAAEDALVEVGITEIHPELVSLLGRLRYRTSYGQNVLKHLVETAHIAGIMAAELRLDVPTIKRCAFLHDIGKALTHEVEGSHAIVGADVARKYGESEDVVHAIEAHHNEVPPQTIEAVLTQASDACSGGRPGARRESLEAYVRRLERIEEIAAGKLGVERVFAMQAGREVRVMVRPEDVDDISASVLARDVAKQIEEELTYPGQIRVTVVRESRVTEIAR</sequence>
<accession>A8M7V7</accession>
<organism>
    <name type="scientific">Salinispora arenicola (strain CNS-205)</name>
    <dbReference type="NCBI Taxonomy" id="391037"/>
    <lineage>
        <taxon>Bacteria</taxon>
        <taxon>Bacillati</taxon>
        <taxon>Actinomycetota</taxon>
        <taxon>Actinomycetes</taxon>
        <taxon>Micromonosporales</taxon>
        <taxon>Micromonosporaceae</taxon>
        <taxon>Salinispora</taxon>
    </lineage>
</organism>
<keyword id="KW-1003">Cell membrane</keyword>
<keyword id="KW-0255">Endonuclease</keyword>
<keyword id="KW-0378">Hydrolase</keyword>
<keyword id="KW-0472">Membrane</keyword>
<keyword id="KW-0540">Nuclease</keyword>
<keyword id="KW-0694">RNA-binding</keyword>
<keyword id="KW-0812">Transmembrane</keyword>
<keyword id="KW-1133">Transmembrane helix</keyword>